<feature type="chain" id="PRO_0000082271" description="Taste receptor type 2 member 136">
    <location>
        <begin position="1"/>
        <end position="305"/>
    </location>
</feature>
<feature type="topological domain" description="Extracellular" evidence="1">
    <location>
        <begin position="1"/>
        <end position="9"/>
    </location>
</feature>
<feature type="transmembrane region" description="Helical; Name=1" evidence="1">
    <location>
        <begin position="10"/>
        <end position="30"/>
    </location>
</feature>
<feature type="topological domain" description="Cytoplasmic" evidence="1">
    <location>
        <begin position="31"/>
        <end position="46"/>
    </location>
</feature>
<feature type="transmembrane region" description="Helical; Name=2" evidence="1">
    <location>
        <begin position="47"/>
        <end position="67"/>
    </location>
</feature>
<feature type="topological domain" description="Extracellular" evidence="1">
    <location>
        <begin position="68"/>
        <end position="69"/>
    </location>
</feature>
<feature type="transmembrane region" description="Helical; Name=3" evidence="1">
    <location>
        <begin position="70"/>
        <end position="90"/>
    </location>
</feature>
<feature type="topological domain" description="Cytoplasmic" evidence="1">
    <location>
        <begin position="91"/>
        <end position="99"/>
    </location>
</feature>
<feature type="transmembrane region" description="Helical; Name=4" evidence="1">
    <location>
        <begin position="100"/>
        <end position="120"/>
    </location>
</feature>
<feature type="topological domain" description="Extracellular" evidence="1">
    <location>
        <begin position="121"/>
        <end position="127"/>
    </location>
</feature>
<feature type="transmembrane region" description="Helical; Name=5" evidence="1">
    <location>
        <begin position="128"/>
        <end position="148"/>
    </location>
</feature>
<feature type="topological domain" description="Cytoplasmic" evidence="1">
    <location>
        <begin position="149"/>
        <end position="176"/>
    </location>
</feature>
<feature type="transmembrane region" description="Helical; Name=6" evidence="1">
    <location>
        <begin position="177"/>
        <end position="197"/>
    </location>
</feature>
<feature type="topological domain" description="Extracellular" evidence="1">
    <location>
        <begin position="198"/>
        <end position="223"/>
    </location>
</feature>
<feature type="transmembrane region" description="Helical; Name=7" evidence="1">
    <location>
        <begin position="224"/>
        <end position="244"/>
    </location>
</feature>
<feature type="topological domain" description="Cytoplasmic" evidence="1">
    <location>
        <begin position="245"/>
        <end position="305"/>
    </location>
</feature>
<comment type="function">
    <text evidence="2">Putative taste receptor which may play a role in the perception of bitterness.</text>
</comment>
<comment type="subcellular location">
    <subcellularLocation>
        <location>Membrane</location>
        <topology>Multi-pass membrane protein</topology>
    </subcellularLocation>
</comment>
<comment type="miscellaneous">
    <text>Several bitter taste receptors are expressed in a single taste receptor cell.</text>
</comment>
<comment type="similarity">
    <text evidence="3">Belongs to the G-protein coupled receptor T2R family.</text>
</comment>
<comment type="sequence caution" evidence="3">
    <conflict type="erroneous gene model prediction">
        <sequence resource="EMBL-CDS" id="AAP40337"/>
    </conflict>
</comment>
<accession>Q7TQA8</accession>
<accession>Q7M716</accession>
<gene>
    <name type="primary">Tas2r136</name>
    <name type="synonym">T2r52</name>
    <name type="synonym">Tas2r36</name>
</gene>
<name>TR136_MOUSE</name>
<protein>
    <recommendedName>
        <fullName>Taste receptor type 2 member 136</fullName>
        <shortName>T2R136</shortName>
    </recommendedName>
    <alternativeName>
        <fullName>Taste receptor type 2 member 36</fullName>
        <shortName>T2R36</shortName>
        <shortName>mT2r52</shortName>
    </alternativeName>
</protein>
<sequence length="305" mass="35019">MMSFLVSIASIAMLVKIVLGTFANVFIVLVNFTDCIKKRKFLLADRILTVLAIFRFDLLWIILMNWSSSVFHVGLYFQVRFCICVVWIVTNHFNTWLANILSILYLLKIDNFSNLIFLGLKGKIKCPYIVLLPCFVLLFPNLIMVTICETTQANGHQGNLTGKTKLTYFTNLIAMTFTLGSLVPFTTFMICFLLLICSLCKHLRTMRLYGKGSQGPSASTHIKVLQVLISFLLLFSMFILLLIISDYNYTKSLEEPIHLICQVIGTLYPSRHSYILLWGNKRIKQAFVLAMVQVRARFWLKEKKP</sequence>
<evidence type="ECO:0000255" key="1"/>
<evidence type="ECO:0000303" key="2">
    <source>
    </source>
</evidence>
<evidence type="ECO:0000305" key="3"/>
<evidence type="ECO:0000312" key="4">
    <source>
        <dbReference type="EMBL" id="AAP40337.1"/>
    </source>
</evidence>
<dbReference type="EMBL" id="AF532787">
    <property type="protein sequence ID" value="AAP40337.1"/>
    <property type="status" value="ALT_SEQ"/>
    <property type="molecule type" value="Genomic_DNA"/>
</dbReference>
<dbReference type="EMBL" id="AC153022">
    <property type="status" value="NOT_ANNOTATED_CDS"/>
    <property type="molecule type" value="Genomic_DNA"/>
</dbReference>
<dbReference type="EMBL" id="BK001081">
    <property type="protein sequence ID" value="DAA01220.1"/>
    <property type="molecule type" value="Genomic_DNA"/>
</dbReference>
<dbReference type="RefSeq" id="NP_851793.1">
    <property type="nucleotide sequence ID" value="NM_181276.1"/>
</dbReference>
<dbReference type="SMR" id="Q7TQA8"/>
<dbReference type="FunCoup" id="Q7TQA8">
    <property type="interactions" value="160"/>
</dbReference>
<dbReference type="STRING" id="10090.ENSMUSP00000070791"/>
<dbReference type="iPTMnet" id="Q7TQA8"/>
<dbReference type="PhosphoSitePlus" id="Q7TQA8"/>
<dbReference type="PaxDb" id="10090-ENSMUSP00000070791"/>
<dbReference type="DNASU" id="353165"/>
<dbReference type="GeneID" id="353165"/>
<dbReference type="KEGG" id="mmu:353165"/>
<dbReference type="UCSC" id="uc009ejo.1">
    <property type="organism name" value="mouse"/>
</dbReference>
<dbReference type="AGR" id="MGI:2681304"/>
<dbReference type="CTD" id="353165"/>
<dbReference type="MGI" id="MGI:2681304">
    <property type="gene designation" value="Tas2r136"/>
</dbReference>
<dbReference type="eggNOG" id="ENOG502TE6U">
    <property type="taxonomic scope" value="Eukaryota"/>
</dbReference>
<dbReference type="InParanoid" id="Q7TQA8"/>
<dbReference type="OrthoDB" id="8876749at2759"/>
<dbReference type="PhylomeDB" id="Q7TQA8"/>
<dbReference type="TreeFam" id="TF335891"/>
<dbReference type="Reactome" id="R-MMU-418594">
    <property type="pathway name" value="G alpha (i) signalling events"/>
</dbReference>
<dbReference type="Reactome" id="R-MMU-420499">
    <property type="pathway name" value="Class C/3 (Metabotropic glutamate/pheromone receptors)"/>
</dbReference>
<dbReference type="Reactome" id="R-MMU-9717207">
    <property type="pathway name" value="Sensory perception of sweet, bitter, and umami (glutamate) taste"/>
</dbReference>
<dbReference type="BioGRID-ORCS" id="353165">
    <property type="hits" value="1 hit in 78 CRISPR screens"/>
</dbReference>
<dbReference type="PRO" id="PR:Q7TQA8"/>
<dbReference type="Proteomes" id="UP000000589">
    <property type="component" value="Unplaced"/>
</dbReference>
<dbReference type="RNAct" id="Q7TQA8">
    <property type="molecule type" value="protein"/>
</dbReference>
<dbReference type="GO" id="GO:0016020">
    <property type="term" value="C:membrane"/>
    <property type="evidence" value="ECO:0000303"/>
    <property type="project" value="UniProtKB"/>
</dbReference>
<dbReference type="GO" id="GO:0033038">
    <property type="term" value="F:bitter taste receptor activity"/>
    <property type="evidence" value="ECO:0007669"/>
    <property type="project" value="InterPro"/>
</dbReference>
<dbReference type="GO" id="GO:0004930">
    <property type="term" value="F:G protein-coupled receptor activity"/>
    <property type="evidence" value="ECO:0007669"/>
    <property type="project" value="UniProtKB-KW"/>
</dbReference>
<dbReference type="GO" id="GO:0008527">
    <property type="term" value="F:taste receptor activity"/>
    <property type="evidence" value="ECO:0000303"/>
    <property type="project" value="UniProtKB"/>
</dbReference>
<dbReference type="GO" id="GO:0001580">
    <property type="term" value="P:detection of chemical stimulus involved in sensory perception of bitter taste"/>
    <property type="evidence" value="ECO:0000303"/>
    <property type="project" value="UniProtKB"/>
</dbReference>
<dbReference type="CDD" id="cd15027">
    <property type="entry name" value="7tm_TAS2R43-like"/>
    <property type="match status" value="1"/>
</dbReference>
<dbReference type="FunFam" id="1.20.1070.10:FF:000055">
    <property type="entry name" value="Taste receptor type 2"/>
    <property type="match status" value="1"/>
</dbReference>
<dbReference type="InterPro" id="IPR007960">
    <property type="entry name" value="TAS2R"/>
</dbReference>
<dbReference type="PANTHER" id="PTHR11394">
    <property type="entry name" value="TASTE RECEPTOR TYPE 2"/>
    <property type="match status" value="1"/>
</dbReference>
<dbReference type="PANTHER" id="PTHR11394:SF81">
    <property type="entry name" value="TASTE RECEPTOR TYPE 2 MEMBER 136"/>
    <property type="match status" value="1"/>
</dbReference>
<dbReference type="Pfam" id="PF05296">
    <property type="entry name" value="TAS2R"/>
    <property type="match status" value="1"/>
</dbReference>
<dbReference type="SUPFAM" id="SSF81321">
    <property type="entry name" value="Family A G protein-coupled receptor-like"/>
    <property type="match status" value="1"/>
</dbReference>
<organism evidence="4">
    <name type="scientific">Mus musculus</name>
    <name type="common">Mouse</name>
    <dbReference type="NCBI Taxonomy" id="10090"/>
    <lineage>
        <taxon>Eukaryota</taxon>
        <taxon>Metazoa</taxon>
        <taxon>Chordata</taxon>
        <taxon>Craniata</taxon>
        <taxon>Vertebrata</taxon>
        <taxon>Euteleostomi</taxon>
        <taxon>Mammalia</taxon>
        <taxon>Eutheria</taxon>
        <taxon>Euarchontoglires</taxon>
        <taxon>Glires</taxon>
        <taxon>Rodentia</taxon>
        <taxon>Myomorpha</taxon>
        <taxon>Muroidea</taxon>
        <taxon>Muridae</taxon>
        <taxon>Murinae</taxon>
        <taxon>Mus</taxon>
        <taxon>Mus</taxon>
    </lineage>
</organism>
<reference evidence="4" key="1">
    <citation type="journal article" date="2003" name="Physiol. Genomics">
        <title>Evolutionary relationships of the Tas2r receptor gene families in mouse and human.</title>
        <authorList>
            <person name="Conte C."/>
            <person name="Ebeling M."/>
            <person name="Marcuz A."/>
            <person name="Nef P."/>
            <person name="Andres-Barquin P.J."/>
        </authorList>
    </citation>
    <scope>NUCLEOTIDE SEQUENCE [GENOMIC DNA]</scope>
    <source>
        <strain evidence="4">C57BL/6J</strain>
    </source>
</reference>
<reference key="2">
    <citation type="journal article" date="2009" name="PLoS Biol.">
        <title>Lineage-specific biology revealed by a finished genome assembly of the mouse.</title>
        <authorList>
            <person name="Church D.M."/>
            <person name="Goodstadt L."/>
            <person name="Hillier L.W."/>
            <person name="Zody M.C."/>
            <person name="Goldstein S."/>
            <person name="She X."/>
            <person name="Bult C.J."/>
            <person name="Agarwala R."/>
            <person name="Cherry J.L."/>
            <person name="DiCuccio M."/>
            <person name="Hlavina W."/>
            <person name="Kapustin Y."/>
            <person name="Meric P."/>
            <person name="Maglott D."/>
            <person name="Birtle Z."/>
            <person name="Marques A.C."/>
            <person name="Graves T."/>
            <person name="Zhou S."/>
            <person name="Teague B."/>
            <person name="Potamousis K."/>
            <person name="Churas C."/>
            <person name="Place M."/>
            <person name="Herschleb J."/>
            <person name="Runnheim R."/>
            <person name="Forrest D."/>
            <person name="Amos-Landgraf J."/>
            <person name="Schwartz D.C."/>
            <person name="Cheng Z."/>
            <person name="Lindblad-Toh K."/>
            <person name="Eichler E.E."/>
            <person name="Ponting C.P."/>
        </authorList>
    </citation>
    <scope>NUCLEOTIDE SEQUENCE [LARGE SCALE GENOMIC DNA]</scope>
    <source>
        <strain>C57BL/6J</strain>
    </source>
</reference>
<reference evidence="3" key="3">
    <citation type="journal article" date="2003" name="Mol. Biol. Evol.">
        <title>Adaptive diversification of bitter taste receptor genes in mammalian evolution.</title>
        <authorList>
            <person name="Shi P."/>
            <person name="Zhang J."/>
            <person name="Yang H."/>
            <person name="Zhang Y.-P."/>
        </authorList>
    </citation>
    <scope>IDENTIFICATION</scope>
</reference>
<proteinExistence type="inferred from homology"/>
<keyword id="KW-0297">G-protein coupled receptor</keyword>
<keyword id="KW-0472">Membrane</keyword>
<keyword id="KW-0675">Receptor</keyword>
<keyword id="KW-1185">Reference proteome</keyword>
<keyword id="KW-0716">Sensory transduction</keyword>
<keyword id="KW-0919">Taste</keyword>
<keyword id="KW-0807">Transducer</keyword>
<keyword id="KW-0812">Transmembrane</keyword>
<keyword id="KW-1133">Transmembrane helix</keyword>